<organism>
    <name type="scientific">Hydrogenovibrio crunogenus (strain DSM 25203 / XCL-2)</name>
    <name type="common">Thiomicrospira crunogena</name>
    <dbReference type="NCBI Taxonomy" id="317025"/>
    <lineage>
        <taxon>Bacteria</taxon>
        <taxon>Pseudomonadati</taxon>
        <taxon>Pseudomonadota</taxon>
        <taxon>Gammaproteobacteria</taxon>
        <taxon>Thiotrichales</taxon>
        <taxon>Piscirickettsiaceae</taxon>
        <taxon>Hydrogenovibrio</taxon>
    </lineage>
</organism>
<dbReference type="EMBL" id="CP000109">
    <property type="protein sequence ID" value="ABB41439.1"/>
    <property type="molecule type" value="Genomic_DNA"/>
</dbReference>
<dbReference type="SMR" id="Q31HD4"/>
<dbReference type="STRING" id="317025.Tcr_0843"/>
<dbReference type="KEGG" id="tcx:Tcr_0843"/>
<dbReference type="eggNOG" id="COG4576">
    <property type="taxonomic scope" value="Bacteria"/>
</dbReference>
<dbReference type="HOGENOM" id="CLU_148498_1_0_6"/>
<dbReference type="OrthoDB" id="540628at2"/>
<dbReference type="GO" id="GO:0031470">
    <property type="term" value="C:carboxysome"/>
    <property type="evidence" value="ECO:0007669"/>
    <property type="project" value="UniProtKB-SubCell"/>
</dbReference>
<dbReference type="GO" id="GO:0015977">
    <property type="term" value="P:carbon fixation"/>
    <property type="evidence" value="ECO:0007669"/>
    <property type="project" value="UniProtKB-KW"/>
</dbReference>
<dbReference type="Gene3D" id="2.40.50.220">
    <property type="entry name" value="EutN/Ccml"/>
    <property type="match status" value="1"/>
</dbReference>
<dbReference type="InterPro" id="IPR014077">
    <property type="entry name" value="CsoS4B"/>
</dbReference>
<dbReference type="InterPro" id="IPR004992">
    <property type="entry name" value="EutN_CcmL"/>
</dbReference>
<dbReference type="InterPro" id="IPR036677">
    <property type="entry name" value="EutN_CcmL_sf"/>
</dbReference>
<dbReference type="NCBIfam" id="TIGR02704">
    <property type="entry name" value="carboxysome_B"/>
    <property type="match status" value="1"/>
</dbReference>
<dbReference type="Pfam" id="PF03319">
    <property type="entry name" value="EutN_CcmL"/>
    <property type="match status" value="1"/>
</dbReference>
<dbReference type="SUPFAM" id="SSF159133">
    <property type="entry name" value="EutN/CcmL-like"/>
    <property type="match status" value="1"/>
</dbReference>
<dbReference type="PROSITE" id="PS51932">
    <property type="entry name" value="BMV"/>
    <property type="match status" value="1"/>
</dbReference>
<proteinExistence type="inferred from homology"/>
<protein>
    <recommendedName>
        <fullName evidence="3">Carboxysome shell vertex protein CsoS4B</fullName>
    </recommendedName>
</protein>
<comment type="function">
    <text evidence="1">Probably forms vertices in the carboxysome, a polyhedral inclusion where RuBisCO (ribulose bisphosphate carboxylase, cbbL-cbbS) is sequestered. Has been modeled to induce curvature upon insertion into an otherwise flat hexagonal layer of major carboxysome subunits.</text>
</comment>
<comment type="subunit">
    <text evidence="1">Homopentamer.</text>
</comment>
<comment type="subcellular location">
    <subcellularLocation>
        <location evidence="5">Carboxysome</location>
    </subcellularLocation>
    <text evidence="4">This bacterium makes alpha-type carboxysomes.</text>
</comment>
<comment type="domain">
    <text evidence="1">The tight homopentamer forms a pore with an opening of about 3.5 Angstroms in diameter which is positively charged.</text>
</comment>
<comment type="similarity">
    <text evidence="4">Belongs to the CcmL/EutN family. CsoS4 subfamily.</text>
</comment>
<accession>Q31HD4</accession>
<evidence type="ECO:0000250" key="1">
    <source>
        <dbReference type="UniProtKB" id="O85043"/>
    </source>
</evidence>
<evidence type="ECO:0000255" key="2">
    <source>
        <dbReference type="PROSITE-ProRule" id="PRU01280"/>
    </source>
</evidence>
<evidence type="ECO:0000303" key="3">
    <source>
    </source>
</evidence>
<evidence type="ECO:0000305" key="4"/>
<evidence type="ECO:0000305" key="5">
    <source>
    </source>
</evidence>
<gene>
    <name evidence="3" type="primary">csoS4B</name>
    <name type="ordered locus">Tcr_0843</name>
</gene>
<reference key="1">
    <citation type="journal article" date="2006" name="PLoS Biol.">
        <title>The genome of deep-sea vent chemolithoautotroph Thiomicrospira crunogena XCL-2.</title>
        <authorList>
            <person name="Scott K.M."/>
            <person name="Sievert S.M."/>
            <person name="Abril F.N."/>
            <person name="Ball L.A."/>
            <person name="Barrett C.J."/>
            <person name="Blake R.A."/>
            <person name="Boller A.J."/>
            <person name="Chain P.S.G."/>
            <person name="Clark J.A."/>
            <person name="Davis C.R."/>
            <person name="Detter C."/>
            <person name="Do K.F."/>
            <person name="Dobrinski K.P."/>
            <person name="Faza B.I."/>
            <person name="Fitzpatrick K.A."/>
            <person name="Freyermuth S.K."/>
            <person name="Harmer T.L."/>
            <person name="Hauser L.J."/>
            <person name="Huegler M."/>
            <person name="Kerfeld C.A."/>
            <person name="Klotz M.G."/>
            <person name="Kong W.W."/>
            <person name="Land M."/>
            <person name="Lapidus A."/>
            <person name="Larimer F.W."/>
            <person name="Longo D.L."/>
            <person name="Lucas S."/>
            <person name="Malfatti S.A."/>
            <person name="Massey S.E."/>
            <person name="Martin D.D."/>
            <person name="McCuddin Z."/>
            <person name="Meyer F."/>
            <person name="Moore J.L."/>
            <person name="Ocampo L.H. Jr."/>
            <person name="Paul J.H."/>
            <person name="Paulsen I.T."/>
            <person name="Reep D.K."/>
            <person name="Ren Q."/>
            <person name="Ross R.L."/>
            <person name="Sato P.Y."/>
            <person name="Thomas P."/>
            <person name="Tinkham L.E."/>
            <person name="Zeruth G.T."/>
        </authorList>
    </citation>
    <scope>NUCLEOTIDE SEQUENCE [LARGE SCALE GENOMIC DNA]</scope>
    <source>
        <strain>DSM 25203 / XCL-2</strain>
    </source>
</reference>
<reference key="2">
    <citation type="journal article" date="2017" name="J. Bacteriol.">
        <title>Proteomic and Mutant Analysis of the CO2 Concentrating Mechanism of Hydrothermal Vent Chemolithoautotroph Thiomicrospira crunogena.</title>
        <authorList>
            <consortium name="USF MCB4404L"/>
            <person name="Mangiapia M."/>
            <person name="Brown T.W."/>
            <person name="Chaput D."/>
            <person name="Haller E."/>
            <person name="Harmer T.L."/>
            <person name="Hashemy Z."/>
            <person name="Keeley R."/>
            <person name="Leonard J."/>
            <person name="Mancera P."/>
            <person name="Nicholson D."/>
            <person name="Stevens S."/>
            <person name="Wanjugi P."/>
            <person name="Zabinski T."/>
            <person name="Pan C."/>
            <person name="Scott K.M."/>
        </authorList>
    </citation>
    <scope>SUBCELLULAR LOCATION</scope>
    <source>
        <strain>DSM 25203 / XCL-2</strain>
    </source>
</reference>
<name>CSS4B_HYDCU</name>
<keyword id="KW-1283">Bacterial microcompartment</keyword>
<keyword id="KW-0120">Carbon dioxide fixation</keyword>
<keyword id="KW-1282">Carboxysome</keyword>
<feature type="chain" id="PRO_0000452083" description="Carboxysome shell vertex protein CsoS4B">
    <location>
        <begin position="1"/>
        <end position="84"/>
    </location>
</feature>
<feature type="domain" description="BMV" evidence="2">
    <location>
        <begin position="1"/>
        <end position="77"/>
    </location>
</feature>
<sequence length="84" mass="9176">MQILQVKKQLVLTSRLKDLGHLPLKALSSETGEIFVAMDPVGTKDGDWVFTIANSAARDAAGDKRLLTDLTVGGIIDDWQPKQK</sequence>